<dbReference type="EMBL" id="CU681846">
    <property type="status" value="NOT_ANNOTATED_CDS"/>
    <property type="molecule type" value="Genomic_DNA"/>
</dbReference>
<dbReference type="RefSeq" id="NP_001410737.1">
    <property type="nucleotide sequence ID" value="NM_001423808.1"/>
</dbReference>
<dbReference type="RefSeq" id="XP_001339169.1">
    <property type="nucleotide sequence ID" value="XM_001339133.4"/>
</dbReference>
<dbReference type="RefSeq" id="XP_021330387.1">
    <property type="nucleotide sequence ID" value="XM_021474712.2"/>
</dbReference>
<dbReference type="SMR" id="E7F7V7"/>
<dbReference type="FunCoup" id="E7F7V7">
    <property type="interactions" value="84"/>
</dbReference>
<dbReference type="STRING" id="7955.ENSDARP00000150204"/>
<dbReference type="PaxDb" id="7955-ENSDARP00000128014"/>
<dbReference type="Ensembl" id="ENSDART00000164581">
    <property type="protein sequence ID" value="ENSDARP00000140272"/>
    <property type="gene ID" value="ENSDARG00000105113"/>
</dbReference>
<dbReference type="Ensembl" id="ENSDART00000188300">
    <property type="protein sequence ID" value="ENSDARP00000150204"/>
    <property type="gene ID" value="ENSDARG00000105113"/>
</dbReference>
<dbReference type="GeneID" id="798737"/>
<dbReference type="AGR" id="ZFIN:ZDB-GENE-131121-48"/>
<dbReference type="ZFIN" id="ZDB-GENE-131121-48">
    <property type="gene designation" value="galr2b"/>
</dbReference>
<dbReference type="eggNOG" id="KOG3656">
    <property type="taxonomic scope" value="Eukaryota"/>
</dbReference>
<dbReference type="HOGENOM" id="CLU_009579_6_4_1"/>
<dbReference type="InParanoid" id="E7F7V7"/>
<dbReference type="OMA" id="PGWEEWK"/>
<dbReference type="OrthoDB" id="5964776at2759"/>
<dbReference type="PhylomeDB" id="E7F7V7"/>
<dbReference type="TreeFam" id="TF315737"/>
<dbReference type="PRO" id="PR:E7F7V7"/>
<dbReference type="Proteomes" id="UP000000437">
    <property type="component" value="Chromosome 3"/>
</dbReference>
<dbReference type="Bgee" id="ENSDARG00000105113">
    <property type="expression patterns" value="Expressed in interpeduncular nucleus and 15 other cell types or tissues"/>
</dbReference>
<dbReference type="GO" id="GO:0005886">
    <property type="term" value="C:plasma membrane"/>
    <property type="evidence" value="ECO:0000318"/>
    <property type="project" value="GO_Central"/>
</dbReference>
<dbReference type="GO" id="GO:0008528">
    <property type="term" value="F:G protein-coupled peptide receptor activity"/>
    <property type="evidence" value="ECO:0000318"/>
    <property type="project" value="GO_Central"/>
</dbReference>
<dbReference type="GO" id="GO:0004966">
    <property type="term" value="F:galanin receptor activity"/>
    <property type="evidence" value="ECO:0000314"/>
    <property type="project" value="ZFIN"/>
</dbReference>
<dbReference type="GO" id="GO:0007218">
    <property type="term" value="P:neuropeptide signaling pathway"/>
    <property type="evidence" value="ECO:0000318"/>
    <property type="project" value="GO_Central"/>
</dbReference>
<dbReference type="CDD" id="cd15097">
    <property type="entry name" value="7tmA_Gal2_Gal3_R"/>
    <property type="match status" value="1"/>
</dbReference>
<dbReference type="FunFam" id="1.20.1070.10:FF:000092">
    <property type="entry name" value="Galanin receptor type 2"/>
    <property type="match status" value="1"/>
</dbReference>
<dbReference type="Gene3D" id="1.20.1070.10">
    <property type="entry name" value="Rhodopsin 7-helix transmembrane proteins"/>
    <property type="match status" value="1"/>
</dbReference>
<dbReference type="InterPro" id="IPR000405">
    <property type="entry name" value="Galanin_rcpt"/>
</dbReference>
<dbReference type="InterPro" id="IPR000276">
    <property type="entry name" value="GPCR_Rhodpsn"/>
</dbReference>
<dbReference type="InterPro" id="IPR017452">
    <property type="entry name" value="GPCR_Rhodpsn_7TM"/>
</dbReference>
<dbReference type="PANTHER" id="PTHR45695">
    <property type="entry name" value="LEUCOKININ RECEPTOR-RELATED"/>
    <property type="match status" value="1"/>
</dbReference>
<dbReference type="PANTHER" id="PTHR45695:SF31">
    <property type="entry name" value="LOC100125055 PROTEIN"/>
    <property type="match status" value="1"/>
</dbReference>
<dbReference type="Pfam" id="PF00001">
    <property type="entry name" value="7tm_1"/>
    <property type="match status" value="1"/>
</dbReference>
<dbReference type="PRINTS" id="PR00663">
    <property type="entry name" value="GALANINR"/>
</dbReference>
<dbReference type="PRINTS" id="PR00237">
    <property type="entry name" value="GPCRRHODOPSN"/>
</dbReference>
<dbReference type="SMART" id="SM01381">
    <property type="entry name" value="7TM_GPCR_Srsx"/>
    <property type="match status" value="1"/>
</dbReference>
<dbReference type="SUPFAM" id="SSF81321">
    <property type="entry name" value="Family A G protein-coupled receptor-like"/>
    <property type="match status" value="1"/>
</dbReference>
<dbReference type="PROSITE" id="PS00237">
    <property type="entry name" value="G_PROTEIN_RECEP_F1_1"/>
    <property type="match status" value="1"/>
</dbReference>
<dbReference type="PROSITE" id="PS50262">
    <property type="entry name" value="G_PROTEIN_RECEP_F1_2"/>
    <property type="match status" value="1"/>
</dbReference>
<sequence length="378" mass="42767">MSDHEDLNKAMGHWNASESYQLNPASVIVSVVFSLIFLLGTIGNSLVLAVLLRSGQVGYNTTNLFILNLSVADFFFIIFCVPFQATIYSLEGWVFGSFMCKVVHFFINLTMYASSFTLAAVSVDRYLAIRYPLRSRELRTPCNAVVAMVVIWGLSLVFAGPYLSYYDLIDFENSNVCVPGWEEHNRKVLDTCTFVFGYVIPVLIVSLSYTRTIKYLWTAVDPLDGMSESKRAKRKVTKMIIIVTVLFCICWLPYHVVILCYLYGDFPFNQTTYAFRLLSHCMAYANSCLNPIVYALVSKHFRKGFKKVFSCILSKKGRNKVHVVNVANTVPGFEAGSTEVSQMNEENARQNESEMVNRPLAQPQDTTMTITLPFQNQP</sequence>
<evidence type="ECO:0000255" key="1"/>
<evidence type="ECO:0000255" key="2">
    <source>
        <dbReference type="PROSITE-ProRule" id="PRU00521"/>
    </source>
</evidence>
<evidence type="ECO:0000256" key="3">
    <source>
        <dbReference type="SAM" id="MobiDB-lite"/>
    </source>
</evidence>
<evidence type="ECO:0000269" key="4">
    <source>
    </source>
</evidence>
<evidence type="ECO:0000269" key="5">
    <source>
    </source>
</evidence>
<evidence type="ECO:0000269" key="6">
    <source>
    </source>
</evidence>
<evidence type="ECO:0000269" key="7">
    <source>
    </source>
</evidence>
<evidence type="ECO:0000303" key="8">
    <source>
    </source>
</evidence>
<evidence type="ECO:0000305" key="9"/>
<evidence type="ECO:0000312" key="10">
    <source>
        <dbReference type="Proteomes" id="UP000000437"/>
    </source>
</evidence>
<evidence type="ECO:0000312" key="11">
    <source>
        <dbReference type="ZFIN" id="ZDB-GENE-131121-48"/>
    </source>
</evidence>
<proteinExistence type="evidence at transcript level"/>
<keyword id="KW-1015">Disulfide bond</keyword>
<keyword id="KW-0297">G-protein coupled receptor</keyword>
<keyword id="KW-0472">Membrane</keyword>
<keyword id="KW-0675">Receptor</keyword>
<keyword id="KW-1185">Reference proteome</keyword>
<keyword id="KW-0807">Transducer</keyword>
<keyword id="KW-0812">Transmembrane</keyword>
<keyword id="KW-1133">Transmembrane helix</keyword>
<organism evidence="10">
    <name type="scientific">Danio rerio</name>
    <name type="common">Zebrafish</name>
    <name type="synonym">Brachydanio rerio</name>
    <dbReference type="NCBI Taxonomy" id="7955"/>
    <lineage>
        <taxon>Eukaryota</taxon>
        <taxon>Metazoa</taxon>
        <taxon>Chordata</taxon>
        <taxon>Craniata</taxon>
        <taxon>Vertebrata</taxon>
        <taxon>Euteleostomi</taxon>
        <taxon>Actinopterygii</taxon>
        <taxon>Neopterygii</taxon>
        <taxon>Teleostei</taxon>
        <taxon>Ostariophysi</taxon>
        <taxon>Cypriniformes</taxon>
        <taxon>Danionidae</taxon>
        <taxon>Danioninae</taxon>
        <taxon>Danio</taxon>
    </lineage>
</organism>
<reference evidence="10" key="1">
    <citation type="journal article" date="2013" name="Nature">
        <title>The zebrafish reference genome sequence and its relationship to the human genome.</title>
        <authorList>
            <person name="Howe K."/>
            <person name="Clark M.D."/>
            <person name="Torroja C.F."/>
            <person name="Torrance J."/>
            <person name="Berthelot C."/>
            <person name="Muffato M."/>
            <person name="Collins J.E."/>
            <person name="Humphray S."/>
            <person name="McLaren K."/>
            <person name="Matthews L."/>
            <person name="McLaren S."/>
            <person name="Sealy I."/>
            <person name="Caccamo M."/>
            <person name="Churcher C."/>
            <person name="Scott C."/>
            <person name="Barrett J.C."/>
            <person name="Koch R."/>
            <person name="Rauch G.J."/>
            <person name="White S."/>
            <person name="Chow W."/>
            <person name="Kilian B."/>
            <person name="Quintais L.T."/>
            <person name="Guerra-Assuncao J.A."/>
            <person name="Zhou Y."/>
            <person name="Gu Y."/>
            <person name="Yen J."/>
            <person name="Vogel J.H."/>
            <person name="Eyre T."/>
            <person name="Redmond S."/>
            <person name="Banerjee R."/>
            <person name="Chi J."/>
            <person name="Fu B."/>
            <person name="Langley E."/>
            <person name="Maguire S.F."/>
            <person name="Laird G.K."/>
            <person name="Lloyd D."/>
            <person name="Kenyon E."/>
            <person name="Donaldson S."/>
            <person name="Sehra H."/>
            <person name="Almeida-King J."/>
            <person name="Loveland J."/>
            <person name="Trevanion S."/>
            <person name="Jones M."/>
            <person name="Quail M."/>
            <person name="Willey D."/>
            <person name="Hunt A."/>
            <person name="Burton J."/>
            <person name="Sims S."/>
            <person name="McLay K."/>
            <person name="Plumb B."/>
            <person name="Davis J."/>
            <person name="Clee C."/>
            <person name="Oliver K."/>
            <person name="Clark R."/>
            <person name="Riddle C."/>
            <person name="Elliot D."/>
            <person name="Threadgold G."/>
            <person name="Harden G."/>
            <person name="Ware D."/>
            <person name="Begum S."/>
            <person name="Mortimore B."/>
            <person name="Kerry G."/>
            <person name="Heath P."/>
            <person name="Phillimore B."/>
            <person name="Tracey A."/>
            <person name="Corby N."/>
            <person name="Dunn M."/>
            <person name="Johnson C."/>
            <person name="Wood J."/>
            <person name="Clark S."/>
            <person name="Pelan S."/>
            <person name="Griffiths G."/>
            <person name="Smith M."/>
            <person name="Glithero R."/>
            <person name="Howden P."/>
            <person name="Barker N."/>
            <person name="Lloyd C."/>
            <person name="Stevens C."/>
            <person name="Harley J."/>
            <person name="Holt K."/>
            <person name="Panagiotidis G."/>
            <person name="Lovell J."/>
            <person name="Beasley H."/>
            <person name="Henderson C."/>
            <person name="Gordon D."/>
            <person name="Auger K."/>
            <person name="Wright D."/>
            <person name="Collins J."/>
            <person name="Raisen C."/>
            <person name="Dyer L."/>
            <person name="Leung K."/>
            <person name="Robertson L."/>
            <person name="Ambridge K."/>
            <person name="Leongamornlert D."/>
            <person name="McGuire S."/>
            <person name="Gilderthorp R."/>
            <person name="Griffiths C."/>
            <person name="Manthravadi D."/>
            <person name="Nichol S."/>
            <person name="Barker G."/>
            <person name="Whitehead S."/>
            <person name="Kay M."/>
            <person name="Brown J."/>
            <person name="Murnane C."/>
            <person name="Gray E."/>
            <person name="Humphries M."/>
            <person name="Sycamore N."/>
            <person name="Barker D."/>
            <person name="Saunders D."/>
            <person name="Wallis J."/>
            <person name="Babbage A."/>
            <person name="Hammond S."/>
            <person name="Mashreghi-Mohammadi M."/>
            <person name="Barr L."/>
            <person name="Martin S."/>
            <person name="Wray P."/>
            <person name="Ellington A."/>
            <person name="Matthews N."/>
            <person name="Ellwood M."/>
            <person name="Woodmansey R."/>
            <person name="Clark G."/>
            <person name="Cooper J."/>
            <person name="Tromans A."/>
            <person name="Grafham D."/>
            <person name="Skuce C."/>
            <person name="Pandian R."/>
            <person name="Andrews R."/>
            <person name="Harrison E."/>
            <person name="Kimberley A."/>
            <person name="Garnett J."/>
            <person name="Fosker N."/>
            <person name="Hall R."/>
            <person name="Garner P."/>
            <person name="Kelly D."/>
            <person name="Bird C."/>
            <person name="Palmer S."/>
            <person name="Gehring I."/>
            <person name="Berger A."/>
            <person name="Dooley C.M."/>
            <person name="Ersan-Urun Z."/>
            <person name="Eser C."/>
            <person name="Geiger H."/>
            <person name="Geisler M."/>
            <person name="Karotki L."/>
            <person name="Kirn A."/>
            <person name="Konantz J."/>
            <person name="Konantz M."/>
            <person name="Oberlander M."/>
            <person name="Rudolph-Geiger S."/>
            <person name="Teucke M."/>
            <person name="Lanz C."/>
            <person name="Raddatz G."/>
            <person name="Osoegawa K."/>
            <person name="Zhu B."/>
            <person name="Rapp A."/>
            <person name="Widaa S."/>
            <person name="Langford C."/>
            <person name="Yang F."/>
            <person name="Schuster S.C."/>
            <person name="Carter N.P."/>
            <person name="Harrow J."/>
            <person name="Ning Z."/>
            <person name="Herrero J."/>
            <person name="Searle S.M."/>
            <person name="Enright A."/>
            <person name="Geisler R."/>
            <person name="Plasterk R.H."/>
            <person name="Lee C."/>
            <person name="Westerfield M."/>
            <person name="de Jong P.J."/>
            <person name="Zon L.I."/>
            <person name="Postlethwait J.H."/>
            <person name="Nusslein-Volhard C."/>
            <person name="Hubbard T.J."/>
            <person name="Roest Crollius H."/>
            <person name="Rogers J."/>
            <person name="Stemple D.L."/>
        </authorList>
    </citation>
    <scope>NUCLEOTIDE SEQUENCE [LARGE SCALE GENOMIC DNA]</scope>
    <source>
        <strain evidence="10">Tuebingen</strain>
    </source>
</reference>
<reference evidence="9" key="2">
    <citation type="journal article" date="2014" name="Endocrinology">
        <title>Coevolution of the spexin/galanin/kisspeptin family: Spexin activates galanin receptor type II and III.</title>
        <authorList>
            <person name="Kim D.K."/>
            <person name="Yun S."/>
            <person name="Son G.H."/>
            <person name="Hwang J.I."/>
            <person name="Park C.R."/>
            <person name="Kim J.I."/>
            <person name="Kim K."/>
            <person name="Vaudry H."/>
            <person name="Seong J.Y."/>
        </authorList>
    </citation>
    <scope>FUNCTION</scope>
</reference>
<reference evidence="9" key="3">
    <citation type="journal article" date="2016" name="Neurosci. Lett.">
        <title>Distribution of galanin receptor 2b neurons and interaction with galanin in the zebrafish central nervous system.</title>
        <authorList>
            <person name="Kim E."/>
            <person name="Jeong I."/>
            <person name="Kim S."/>
            <person name="Kim H.K."/>
            <person name="Lee D.W."/>
            <person name="Kim B."/>
            <person name="Seong J.Y."/>
            <person name="Bae Y.K."/>
            <person name="Ryu J.H."/>
            <person name="Park H.C."/>
        </authorList>
    </citation>
    <scope>DEVELOPMENTAL STAGE</scope>
</reference>
<reference evidence="9" key="4">
    <citation type="journal article" date="2019" name="Front. Neural Circuits">
        <title>Overexpression of Spexin 1 in the Dorsal Habenula Reduces Anxiety in Zebrafish.</title>
        <authorList>
            <person name="Jeong I."/>
            <person name="Kim E."/>
            <person name="Seong J.Y."/>
            <person name="Park H.C."/>
        </authorList>
    </citation>
    <scope>FUNCTION</scope>
</reference>
<reference evidence="9" key="5">
    <citation type="journal article" date="2019" name="Sci. Rep.">
        <title>Distribution and neuronal circuit of spexin 1/2 neurons in the zebrafish CNS.</title>
        <authorList>
            <person name="Kim E."/>
            <person name="Jeong I."/>
            <person name="Chung A.Y."/>
            <person name="Kim S."/>
            <person name="Kwon S.H."/>
            <person name="Seong J.Y."/>
            <person name="Park H.C."/>
        </authorList>
    </citation>
    <scope>TISSUE SPECIFICITY</scope>
    <scope>DEVELOPMENTAL STAGE</scope>
</reference>
<protein>
    <recommendedName>
        <fullName evidence="8">Galanin receptor 2b</fullName>
    </recommendedName>
</protein>
<gene>
    <name evidence="8 11" type="primary">galr2b</name>
</gene>
<name>GAL2B_DANRE</name>
<feature type="chain" id="PRO_0000448937" description="Galanin receptor 2b">
    <location>
        <begin position="1"/>
        <end position="378"/>
    </location>
</feature>
<feature type="topological domain" description="Extracellular" evidence="9">
    <location>
        <begin position="1"/>
        <end position="30"/>
    </location>
</feature>
<feature type="transmembrane region" description="Helical; Name=1" evidence="1">
    <location>
        <begin position="31"/>
        <end position="51"/>
    </location>
</feature>
<feature type="topological domain" description="Cytoplasmic" evidence="9">
    <location>
        <begin position="52"/>
        <end position="62"/>
    </location>
</feature>
<feature type="transmembrane region" description="Helical; Name=2" evidence="1">
    <location>
        <begin position="63"/>
        <end position="83"/>
    </location>
</feature>
<feature type="topological domain" description="Extracellular" evidence="9">
    <location>
        <begin position="84"/>
        <end position="101"/>
    </location>
</feature>
<feature type="transmembrane region" description="Helical; Name=3" evidence="1">
    <location>
        <begin position="102"/>
        <end position="123"/>
    </location>
</feature>
<feature type="topological domain" description="Cytoplasmic" evidence="9">
    <location>
        <begin position="124"/>
        <end position="143"/>
    </location>
</feature>
<feature type="transmembrane region" description="Helical; Name=4" evidence="1">
    <location>
        <begin position="144"/>
        <end position="164"/>
    </location>
</feature>
<feature type="topological domain" description="Extracellular" evidence="9">
    <location>
        <begin position="165"/>
        <end position="187"/>
    </location>
</feature>
<feature type="transmembrane region" description="Helical; Name=5" evidence="1">
    <location>
        <begin position="188"/>
        <end position="208"/>
    </location>
</feature>
<feature type="topological domain" description="Cytoplasmic" evidence="9">
    <location>
        <begin position="209"/>
        <end position="238"/>
    </location>
</feature>
<feature type="transmembrane region" description="Helical; Name=6" evidence="1">
    <location>
        <begin position="239"/>
        <end position="259"/>
    </location>
</feature>
<feature type="topological domain" description="Extracellular" evidence="9">
    <location>
        <begin position="260"/>
        <end position="276"/>
    </location>
</feature>
<feature type="transmembrane region" description="Helical; Name=7" evidence="1">
    <location>
        <begin position="277"/>
        <end position="297"/>
    </location>
</feature>
<feature type="topological domain" description="Cytoplasmic" evidence="9">
    <location>
        <begin position="298"/>
        <end position="378"/>
    </location>
</feature>
<feature type="region of interest" description="Disordered" evidence="3">
    <location>
        <begin position="339"/>
        <end position="362"/>
    </location>
</feature>
<feature type="disulfide bond" evidence="2">
    <location>
        <begin position="100"/>
        <end position="177"/>
    </location>
</feature>
<comment type="function">
    <text evidence="4 7">Receptor for the hormone galanin (PubMed:24517231). Receptor for the hormones spexin-1 and spexin-2 (PubMed:24517231, PubMed:31474838).</text>
</comment>
<comment type="subcellular location">
    <subcellularLocation>
        <location evidence="1">Membrane</location>
        <topology evidence="1">Multi-pass membrane protein</topology>
    </subcellularLocation>
</comment>
<comment type="tissue specificity">
    <text evidence="6">Expressed in neurons in the ventral area of the interpeduncular nucleus (IPN) where expression often overlaps with spx1.</text>
</comment>
<comment type="developmental stage">
    <text evidence="5 6">In embryos, widely expressed in nerve cells innervating the central nervous system (CNS) in regions including the olfactory bulb, midbrain tegmentum, preoptic region, dorsal thalamus, posterior tuberculum, postoptic commissure, hindbrain, and lateral margin of the spinal cord (PubMed:27315774). In the spinal cord, expressed in various neuronal cell types throughout the dorsoventral axis, including motor neurons and interneurons (PubMed:27315774). In the postoptic commissure, anterior commissure, hypothalamus and pituitary gland, expression overlaps with gal (PubMed:27315774). In larvae, expressed in nerve cells in the dorsal spinal cord where expression often overlaps with spx1 (PubMed:30903017).</text>
</comment>
<comment type="similarity">
    <text evidence="9">Belongs to the G-protein coupled receptor 1 family.</text>
</comment>
<accession>E7F7V7</accession>